<proteinExistence type="evidence at protein level"/>
<reference key="1">
    <citation type="journal article" date="1997" name="Nature">
        <title>The nucleotide sequence of Saccharomyces cerevisiae chromosome IV.</title>
        <authorList>
            <person name="Jacq C."/>
            <person name="Alt-Moerbe J."/>
            <person name="Andre B."/>
            <person name="Arnold W."/>
            <person name="Bahr A."/>
            <person name="Ballesta J.P.G."/>
            <person name="Bargues M."/>
            <person name="Baron L."/>
            <person name="Becker A."/>
            <person name="Biteau N."/>
            <person name="Bloecker H."/>
            <person name="Blugeon C."/>
            <person name="Boskovic J."/>
            <person name="Brandt P."/>
            <person name="Brueckner M."/>
            <person name="Buitrago M.J."/>
            <person name="Coster F."/>
            <person name="Delaveau T."/>
            <person name="del Rey F."/>
            <person name="Dujon B."/>
            <person name="Eide L.G."/>
            <person name="Garcia-Cantalejo J.M."/>
            <person name="Goffeau A."/>
            <person name="Gomez-Peris A."/>
            <person name="Granotier C."/>
            <person name="Hanemann V."/>
            <person name="Hankeln T."/>
            <person name="Hoheisel J.D."/>
            <person name="Jaeger W."/>
            <person name="Jimenez A."/>
            <person name="Jonniaux J.-L."/>
            <person name="Kraemer C."/>
            <person name="Kuester H."/>
            <person name="Laamanen P."/>
            <person name="Legros Y."/>
            <person name="Louis E.J."/>
            <person name="Moeller-Rieker S."/>
            <person name="Monnet A."/>
            <person name="Moro M."/>
            <person name="Mueller-Auer S."/>
            <person name="Nussbaumer B."/>
            <person name="Paricio N."/>
            <person name="Paulin L."/>
            <person name="Perea J."/>
            <person name="Perez-Alonso M."/>
            <person name="Perez-Ortin J.E."/>
            <person name="Pohl T.M."/>
            <person name="Prydz H."/>
            <person name="Purnelle B."/>
            <person name="Rasmussen S.W."/>
            <person name="Remacha M.A."/>
            <person name="Revuelta J.L."/>
            <person name="Rieger M."/>
            <person name="Salom D."/>
            <person name="Saluz H.P."/>
            <person name="Saiz J.E."/>
            <person name="Saren A.-M."/>
            <person name="Schaefer M."/>
            <person name="Scharfe M."/>
            <person name="Schmidt E.R."/>
            <person name="Schneider C."/>
            <person name="Scholler P."/>
            <person name="Schwarz S."/>
            <person name="Soler-Mira A."/>
            <person name="Urrestarazu L.A."/>
            <person name="Verhasselt P."/>
            <person name="Vissers S."/>
            <person name="Voet M."/>
            <person name="Volckaert G."/>
            <person name="Wagner G."/>
            <person name="Wambutt R."/>
            <person name="Wedler E."/>
            <person name="Wedler H."/>
            <person name="Woelfl S."/>
            <person name="Harris D.E."/>
            <person name="Bowman S."/>
            <person name="Brown D."/>
            <person name="Churcher C.M."/>
            <person name="Connor R."/>
            <person name="Dedman K."/>
            <person name="Gentles S."/>
            <person name="Hamlin N."/>
            <person name="Hunt S."/>
            <person name="Jones L."/>
            <person name="McDonald S."/>
            <person name="Murphy L.D."/>
            <person name="Niblett D."/>
            <person name="Odell C."/>
            <person name="Oliver K."/>
            <person name="Rajandream M.A."/>
            <person name="Richards C."/>
            <person name="Shore L."/>
            <person name="Walsh S.V."/>
            <person name="Barrell B.G."/>
            <person name="Dietrich F.S."/>
            <person name="Mulligan J.T."/>
            <person name="Allen E."/>
            <person name="Araujo R."/>
            <person name="Aviles E."/>
            <person name="Berno A."/>
            <person name="Carpenter J."/>
            <person name="Chen E."/>
            <person name="Cherry J.M."/>
            <person name="Chung E."/>
            <person name="Duncan M."/>
            <person name="Hunicke-Smith S."/>
            <person name="Hyman R.W."/>
            <person name="Komp C."/>
            <person name="Lashkari D."/>
            <person name="Lew H."/>
            <person name="Lin D."/>
            <person name="Mosedale D."/>
            <person name="Nakahara K."/>
            <person name="Namath A."/>
            <person name="Oefner P."/>
            <person name="Oh C."/>
            <person name="Petel F.X."/>
            <person name="Roberts D."/>
            <person name="Schramm S."/>
            <person name="Schroeder M."/>
            <person name="Shogren T."/>
            <person name="Shroff N."/>
            <person name="Winant A."/>
            <person name="Yelton M.A."/>
            <person name="Botstein D."/>
            <person name="Davis R.W."/>
            <person name="Johnston M."/>
            <person name="Andrews S."/>
            <person name="Brinkman R."/>
            <person name="Cooper J."/>
            <person name="Ding H."/>
            <person name="Du Z."/>
            <person name="Favello A."/>
            <person name="Fulton L."/>
            <person name="Gattung S."/>
            <person name="Greco T."/>
            <person name="Hallsworth K."/>
            <person name="Hawkins J."/>
            <person name="Hillier L.W."/>
            <person name="Jier M."/>
            <person name="Johnson D."/>
            <person name="Johnston L."/>
            <person name="Kirsten J."/>
            <person name="Kucaba T."/>
            <person name="Langston Y."/>
            <person name="Latreille P."/>
            <person name="Le T."/>
            <person name="Mardis E."/>
            <person name="Menezes S."/>
            <person name="Miller N."/>
            <person name="Nhan M."/>
            <person name="Pauley A."/>
            <person name="Peluso D."/>
            <person name="Rifkin L."/>
            <person name="Riles L."/>
            <person name="Taich A."/>
            <person name="Trevaskis E."/>
            <person name="Vignati D."/>
            <person name="Wilcox L."/>
            <person name="Wohldman P."/>
            <person name="Vaudin M."/>
            <person name="Wilson R."/>
            <person name="Waterston R."/>
            <person name="Albermann K."/>
            <person name="Hani J."/>
            <person name="Heumann K."/>
            <person name="Kleine K."/>
            <person name="Mewes H.-W."/>
            <person name="Zollner A."/>
            <person name="Zaccaria P."/>
        </authorList>
    </citation>
    <scope>NUCLEOTIDE SEQUENCE [LARGE SCALE GENOMIC DNA]</scope>
    <source>
        <strain>ATCC 204508 / S288c</strain>
    </source>
</reference>
<reference key="2">
    <citation type="journal article" date="2014" name="G3 (Bethesda)">
        <title>The reference genome sequence of Saccharomyces cerevisiae: Then and now.</title>
        <authorList>
            <person name="Engel S.R."/>
            <person name="Dietrich F.S."/>
            <person name="Fisk D.G."/>
            <person name="Binkley G."/>
            <person name="Balakrishnan R."/>
            <person name="Costanzo M.C."/>
            <person name="Dwight S.S."/>
            <person name="Hitz B.C."/>
            <person name="Karra K."/>
            <person name="Nash R.S."/>
            <person name="Weng S."/>
            <person name="Wong E.D."/>
            <person name="Lloyd P."/>
            <person name="Skrzypek M.S."/>
            <person name="Miyasato S.R."/>
            <person name="Simison M."/>
            <person name="Cherry J.M."/>
        </authorList>
    </citation>
    <scope>GENOME REANNOTATION</scope>
    <source>
        <strain>ATCC 204508 / S288c</strain>
    </source>
</reference>
<reference key="3">
    <citation type="journal article" date="2007" name="Genome Res.">
        <title>Approaching a complete repository of sequence-verified protein-encoding clones for Saccharomyces cerevisiae.</title>
        <authorList>
            <person name="Hu Y."/>
            <person name="Rolfs A."/>
            <person name="Bhullar B."/>
            <person name="Murthy T.V.S."/>
            <person name="Zhu C."/>
            <person name="Berger M.F."/>
            <person name="Camargo A.A."/>
            <person name="Kelley F."/>
            <person name="McCarron S."/>
            <person name="Jepson D."/>
            <person name="Richardson A."/>
            <person name="Raphael J."/>
            <person name="Moreira D."/>
            <person name="Taycher E."/>
            <person name="Zuo D."/>
            <person name="Mohr S."/>
            <person name="Kane M.F."/>
            <person name="Williamson J."/>
            <person name="Simpson A.J.G."/>
            <person name="Bulyk M.L."/>
            <person name="Harlow E."/>
            <person name="Marsischky G."/>
            <person name="Kolodner R.D."/>
            <person name="LaBaer J."/>
        </authorList>
    </citation>
    <scope>NUCLEOTIDE SEQUENCE [GENOMIC DNA]</scope>
</reference>
<reference key="4">
    <citation type="journal article" date="1998" name="J. Biol. Chem.">
        <title>Isolation and characterization of the Saccharomyces cerevisiae LPP1 gene encoding a Mg2+-independent phosphatidate phosphatase.</title>
        <authorList>
            <person name="Toke D.A."/>
            <person name="Bennett W.L."/>
            <person name="Oshiro J."/>
            <person name="Wu W.I."/>
            <person name="Voelker D.R."/>
            <person name="Carman G.M."/>
        </authorList>
    </citation>
    <scope>FUNCTION</scope>
    <scope>CATALYTIC ACTIVITY</scope>
</reference>
<reference key="5">
    <citation type="journal article" date="1999" name="J. Biol. Chem.">
        <title>The LPP1 and DPP1 gene products account for most of the isoprenoid phosphate phosphatase activities in Saccharomyces cerevisiae.</title>
        <authorList>
            <person name="Faulkner A."/>
            <person name="Chen X."/>
            <person name="Rush J."/>
            <person name="Horazdovsky B."/>
            <person name="Waechter C.J."/>
            <person name="Carman G.M."/>
            <person name="Sternweis P.C."/>
        </authorList>
    </citation>
    <scope>FUNCTION</scope>
</reference>
<reference key="6">
    <citation type="journal article" date="2000" name="Biochim. Biophys. Acta">
        <title>Enzymological properties of the LPP1-encoded lipid phosphatase from Saccharomyces cerevisiae.</title>
        <authorList>
            <person name="Furneisen J.M."/>
            <person name="Carman G.M."/>
        </authorList>
    </citation>
    <scope>FUNCTION</scope>
    <scope>ACTIVITY REGULATION</scope>
</reference>
<reference key="7">
    <citation type="journal article" date="2003" name="Genes Cells">
        <title>Transmembrane topology of sphingoid long-chain base-1-phosphate phosphatase, Lcb3p.</title>
        <authorList>
            <person name="Kihara A."/>
            <person name="Sano T."/>
            <person name="Iwaki S."/>
            <person name="Igarashi Y."/>
        </authorList>
    </citation>
    <scope>TOPOLOGY</scope>
</reference>
<reference key="8">
    <citation type="journal article" date="2003" name="Nature">
        <title>Global analysis of protein localization in budding yeast.</title>
        <authorList>
            <person name="Huh W.-K."/>
            <person name="Falvo J.V."/>
            <person name="Gerke L.C."/>
            <person name="Carroll A.S."/>
            <person name="Howson R.W."/>
            <person name="Weissman J.S."/>
            <person name="O'Shea E.K."/>
        </authorList>
    </citation>
    <scope>SUBCELLULAR LOCATION [LARGE SCALE ANALYSIS]</scope>
</reference>
<reference key="9">
    <citation type="journal article" date="2003" name="Nature">
        <title>Global analysis of protein expression in yeast.</title>
        <authorList>
            <person name="Ghaemmaghami S."/>
            <person name="Huh W.-K."/>
            <person name="Bower K."/>
            <person name="Howson R.W."/>
            <person name="Belle A."/>
            <person name="Dephoure N."/>
            <person name="O'Shea E.K."/>
            <person name="Weissman J.S."/>
        </authorList>
    </citation>
    <scope>LEVEL OF PROTEIN EXPRESSION [LARGE SCALE ANALYSIS]</scope>
</reference>
<organism>
    <name type="scientific">Saccharomyces cerevisiae (strain ATCC 204508 / S288c)</name>
    <name type="common">Baker's yeast</name>
    <dbReference type="NCBI Taxonomy" id="559292"/>
    <lineage>
        <taxon>Eukaryota</taxon>
        <taxon>Fungi</taxon>
        <taxon>Dikarya</taxon>
        <taxon>Ascomycota</taxon>
        <taxon>Saccharomycotina</taxon>
        <taxon>Saccharomycetes</taxon>
        <taxon>Saccharomycetales</taxon>
        <taxon>Saccharomycetaceae</taxon>
        <taxon>Saccharomyces</taxon>
    </lineage>
</organism>
<gene>
    <name type="primary">LPP1</name>
    <name type="ordered locus">YDR503C</name>
    <name type="ORF">D9719.9</name>
</gene>
<keyword id="KW-0333">Golgi apparatus</keyword>
<keyword id="KW-0378">Hydrolase</keyword>
<keyword id="KW-0472">Membrane</keyword>
<keyword id="KW-1185">Reference proteome</keyword>
<keyword id="KW-0812">Transmembrane</keyword>
<keyword id="KW-1133">Transmembrane helix</keyword>
<dbReference type="EC" id="3.6.1.75" evidence="6"/>
<dbReference type="EC" id="3.1.3.106"/>
<dbReference type="EC" id="3.1.3.4" evidence="6"/>
<dbReference type="EMBL" id="U33057">
    <property type="protein sequence ID" value="AAB64945.1"/>
    <property type="molecule type" value="Genomic_DNA"/>
</dbReference>
<dbReference type="EMBL" id="AY693191">
    <property type="protein sequence ID" value="AAT93210.1"/>
    <property type="molecule type" value="Genomic_DNA"/>
</dbReference>
<dbReference type="EMBL" id="BK006938">
    <property type="protein sequence ID" value="DAA12335.1"/>
    <property type="molecule type" value="Genomic_DNA"/>
</dbReference>
<dbReference type="PIR" id="S69561">
    <property type="entry name" value="S69561"/>
</dbReference>
<dbReference type="RefSeq" id="NP_010791.3">
    <property type="nucleotide sequence ID" value="NM_001180811.3"/>
</dbReference>
<dbReference type="BioGRID" id="32554">
    <property type="interactions" value="78"/>
</dbReference>
<dbReference type="DIP" id="DIP-1415N"/>
<dbReference type="FunCoup" id="Q04396">
    <property type="interactions" value="98"/>
</dbReference>
<dbReference type="IntAct" id="Q04396">
    <property type="interactions" value="8"/>
</dbReference>
<dbReference type="MINT" id="Q04396"/>
<dbReference type="STRING" id="4932.YDR503C"/>
<dbReference type="SwissLipids" id="SLP:000000058"/>
<dbReference type="iPTMnet" id="Q04396"/>
<dbReference type="PaxDb" id="4932-YDR503C"/>
<dbReference type="PeptideAtlas" id="Q04396"/>
<dbReference type="DNASU" id="852114"/>
<dbReference type="EnsemblFungi" id="YDR503C_mRNA">
    <property type="protein sequence ID" value="YDR503C"/>
    <property type="gene ID" value="YDR503C"/>
</dbReference>
<dbReference type="GeneID" id="852114"/>
<dbReference type="KEGG" id="sce:YDR503C"/>
<dbReference type="AGR" id="SGD:S000002911"/>
<dbReference type="SGD" id="S000002911">
    <property type="gene designation" value="LPP1"/>
</dbReference>
<dbReference type="VEuPathDB" id="FungiDB:YDR503C"/>
<dbReference type="eggNOG" id="KOG3030">
    <property type="taxonomic scope" value="Eukaryota"/>
</dbReference>
<dbReference type="HOGENOM" id="CLU_021458_4_0_1"/>
<dbReference type="InParanoid" id="Q04396"/>
<dbReference type="OMA" id="YGLDICQ"/>
<dbReference type="OrthoDB" id="10030083at2759"/>
<dbReference type="BioCyc" id="MetaCyc:YDR503C-MONOMER"/>
<dbReference type="BioCyc" id="YEAST:YDR503C-MONOMER"/>
<dbReference type="Reactome" id="R-SCE-2029485">
    <property type="pathway name" value="Role of phospholipids in phagocytosis"/>
</dbReference>
<dbReference type="Reactome" id="R-SCE-419408">
    <property type="pathway name" value="Lysosphingolipid and LPA receptors"/>
</dbReference>
<dbReference type="Reactome" id="R-SCE-9845614">
    <property type="pathway name" value="Sphingolipid catabolism"/>
</dbReference>
<dbReference type="BioGRID-ORCS" id="852114">
    <property type="hits" value="0 hits in 10 CRISPR screens"/>
</dbReference>
<dbReference type="PRO" id="PR:Q04396"/>
<dbReference type="Proteomes" id="UP000002311">
    <property type="component" value="Chromosome IV"/>
</dbReference>
<dbReference type="RNAct" id="Q04396">
    <property type="molecule type" value="protein"/>
</dbReference>
<dbReference type="GO" id="GO:0000139">
    <property type="term" value="C:Golgi membrane"/>
    <property type="evidence" value="ECO:0007669"/>
    <property type="project" value="UniProtKB-SubCell"/>
</dbReference>
<dbReference type="GO" id="GO:0016020">
    <property type="term" value="C:membrane"/>
    <property type="evidence" value="ECO:0000314"/>
    <property type="project" value="SGD"/>
</dbReference>
<dbReference type="GO" id="GO:0000810">
    <property type="term" value="F:diacylglycerol diphosphate phosphatase activity"/>
    <property type="evidence" value="ECO:0007669"/>
    <property type="project" value="RHEA"/>
</dbReference>
<dbReference type="GO" id="GO:0052642">
    <property type="term" value="F:lysophosphatidic acid phosphatase activity"/>
    <property type="evidence" value="ECO:0007669"/>
    <property type="project" value="RHEA"/>
</dbReference>
<dbReference type="GO" id="GO:0008195">
    <property type="term" value="F:phosphatidate phosphatase activity"/>
    <property type="evidence" value="ECO:0000314"/>
    <property type="project" value="SGD"/>
</dbReference>
<dbReference type="GO" id="GO:0046839">
    <property type="term" value="P:phospholipid dephosphorylation"/>
    <property type="evidence" value="ECO:0000318"/>
    <property type="project" value="GO_Central"/>
</dbReference>
<dbReference type="GO" id="GO:0006644">
    <property type="term" value="P:phospholipid metabolic process"/>
    <property type="evidence" value="ECO:0000315"/>
    <property type="project" value="SGD"/>
</dbReference>
<dbReference type="CDD" id="cd03390">
    <property type="entry name" value="PAP2_containing_1_like"/>
    <property type="match status" value="1"/>
</dbReference>
<dbReference type="FunFam" id="1.20.144.10:FF:000038">
    <property type="entry name" value="Lipid phosphate phosphatase"/>
    <property type="match status" value="1"/>
</dbReference>
<dbReference type="Gene3D" id="1.20.144.10">
    <property type="entry name" value="Phosphatidic acid phosphatase type 2/haloperoxidase"/>
    <property type="match status" value="1"/>
</dbReference>
<dbReference type="InterPro" id="IPR036938">
    <property type="entry name" value="P_Acid_Pase_2/haloperoxi_sf"/>
</dbReference>
<dbReference type="InterPro" id="IPR000326">
    <property type="entry name" value="P_Acid_Pase_2/haloperoxidase"/>
</dbReference>
<dbReference type="InterPro" id="IPR043216">
    <property type="entry name" value="PA_PP_rel"/>
</dbReference>
<dbReference type="PANTHER" id="PTHR10165">
    <property type="entry name" value="LIPID PHOSPHATE PHOSPHATASE"/>
    <property type="match status" value="1"/>
</dbReference>
<dbReference type="PANTHER" id="PTHR10165:SF155">
    <property type="entry name" value="LIPID PHOSPHATE PHOSPHATASE 1"/>
    <property type="match status" value="1"/>
</dbReference>
<dbReference type="Pfam" id="PF01569">
    <property type="entry name" value="PAP2"/>
    <property type="match status" value="1"/>
</dbReference>
<dbReference type="SMART" id="SM00014">
    <property type="entry name" value="acidPPc"/>
    <property type="match status" value="1"/>
</dbReference>
<dbReference type="SUPFAM" id="SSF48317">
    <property type="entry name" value="Acid phosphatase/Vanadium-dependent haloperoxidase"/>
    <property type="match status" value="1"/>
</dbReference>
<comment type="function">
    <text evidence="2 3 6">Catalyzes the dephosphorylation of diacylglycerol diphosphate (DGPP) to phosphatidate (PA) and the subsequent dephosphorylation of PA to diacylglycerol (DAG). Together with DPP1, regulates intracellular DGPP and PA levels which are phospholipid molecules believed to play a signaling role in stress response. Can also use lysophosphatidic acid (LPA) as a substrate. Substrate preference is PA &gt; DGPP &gt; LPA.</text>
</comment>
<comment type="catalytic activity">
    <reaction evidence="3 6">
        <text>a 1,2-diacyl-sn-glycerol 3-diphosphate + H2O = a 1,2-diacyl-sn-glycero-3-phosphate + phosphate + H(+)</text>
        <dbReference type="Rhea" id="RHEA:27449"/>
        <dbReference type="ChEBI" id="CHEBI:15377"/>
        <dbReference type="ChEBI" id="CHEBI:15378"/>
        <dbReference type="ChEBI" id="CHEBI:43474"/>
        <dbReference type="ChEBI" id="CHEBI:58608"/>
        <dbReference type="ChEBI" id="CHEBI:59996"/>
        <dbReference type="EC" id="3.6.1.75"/>
    </reaction>
    <physiologicalReaction direction="left-to-right" evidence="9 10">
        <dbReference type="Rhea" id="RHEA:27450"/>
    </physiologicalReaction>
</comment>
<comment type="catalytic activity">
    <reaction evidence="3 6">
        <text>a 1,2-diacyl-sn-glycero-3-phosphate + H2O = a 1,2-diacyl-sn-glycerol + phosphate</text>
        <dbReference type="Rhea" id="RHEA:27429"/>
        <dbReference type="ChEBI" id="CHEBI:15377"/>
        <dbReference type="ChEBI" id="CHEBI:17815"/>
        <dbReference type="ChEBI" id="CHEBI:43474"/>
        <dbReference type="ChEBI" id="CHEBI:58608"/>
        <dbReference type="EC" id="3.1.3.4"/>
    </reaction>
    <physiologicalReaction direction="left-to-right" evidence="9 10">
        <dbReference type="Rhea" id="RHEA:27430"/>
    </physiologicalReaction>
</comment>
<comment type="catalytic activity">
    <reaction evidence="3 6">
        <text>a 1-acyl-sn-glycero-3-phosphate + H2O = a 1-acyl-sn-glycerol + phosphate</text>
        <dbReference type="Rhea" id="RHEA:33155"/>
        <dbReference type="ChEBI" id="CHEBI:15377"/>
        <dbReference type="ChEBI" id="CHEBI:43474"/>
        <dbReference type="ChEBI" id="CHEBI:57970"/>
        <dbReference type="ChEBI" id="CHEBI:64683"/>
        <dbReference type="EC" id="3.1.3.106"/>
    </reaction>
    <physiologicalReaction direction="left-to-right" evidence="9 10">
        <dbReference type="Rhea" id="RHEA:33156"/>
    </physiologicalReaction>
</comment>
<comment type="activity regulation">
    <text evidence="3">PA phosphatase activity is magnesium ion-independent and potently inhibited by N-ethylmaleimide. Also inhibited by phenylglyoxal and propranolol.</text>
</comment>
<comment type="subcellular location">
    <subcellularLocation>
        <location evidence="4">Golgi apparatus membrane</location>
        <topology evidence="4">Multi-pass membrane protein</topology>
    </subcellularLocation>
</comment>
<comment type="domain">
    <text>The phosphatase sequence motif I (including Arg-143) and II (including His-189) are part of the cytoplasmic loop 2 and phosphatase sequence motif III (including His-235) is part of the cytoplasmic loop 3.</text>
</comment>
<comment type="miscellaneous">
    <text evidence="5">Present with 300 molecules/cell in log phase SD medium.</text>
</comment>
<comment type="similarity">
    <text evidence="8">Belongs to the PA-phosphatase related phosphoesterase family.</text>
</comment>
<name>LPP1_YEAST</name>
<accession>Q04396</accession>
<accession>D6VTC5</accession>
<evidence type="ECO:0000255" key="1"/>
<evidence type="ECO:0000269" key="2">
    <source>
    </source>
</evidence>
<evidence type="ECO:0000269" key="3">
    <source>
    </source>
</evidence>
<evidence type="ECO:0000269" key="4">
    <source>
    </source>
</evidence>
<evidence type="ECO:0000269" key="5">
    <source>
    </source>
</evidence>
<evidence type="ECO:0000269" key="6">
    <source>
    </source>
</evidence>
<evidence type="ECO:0000303" key="7">
    <source>
    </source>
</evidence>
<evidence type="ECO:0000305" key="8"/>
<evidence type="ECO:0000305" key="9">
    <source>
    </source>
</evidence>
<evidence type="ECO:0000305" key="10">
    <source>
    </source>
</evidence>
<sequence>MISVMADEKHKEYFKLYYFQYMIIGLCTILFLYSEISLVPRGQNIEFSLDDPSISKRYVPNELVGPLECLILSVGLSNMVVFWTCMFDKDLLKKNRVKRLRERPDGISNDFHFMHTSILCLMLIISINAALTGALKLIIGNLRPDFVDRCIPDLQKMSDSDSLVFGLDICKQTNKWILYEGLKSTPSGHSSFIVSTMGFTYLWQRVFTTRNTRSCIWCPLLALVVMVSRVIDHRHHWYDVVSGAVLAFLVIYCCWKWTFTNLAKRDILPSPVSV</sequence>
<protein>
    <recommendedName>
        <fullName>Lipid phosphate phosphatase 1</fullName>
        <ecNumber evidence="6">3.6.1.75</ecNumber>
    </recommendedName>
    <alternativeName>
        <fullName>Lysophosphatidate phosphatase</fullName>
        <ecNumber>3.1.3.106</ecNumber>
    </alternativeName>
    <alternativeName>
        <fullName evidence="7">Phosphatidate phosphatase</fullName>
        <ecNumber evidence="6">3.1.3.4</ecNumber>
    </alternativeName>
</protein>
<feature type="chain" id="PRO_0000220919" description="Lipid phosphate phosphatase 1">
    <location>
        <begin position="1"/>
        <end position="274"/>
    </location>
</feature>
<feature type="topological domain" description="Lumenal" evidence="1">
    <location>
        <begin position="1"/>
        <end position="15"/>
    </location>
</feature>
<feature type="transmembrane region" description="Helical; Name=1" evidence="1">
    <location>
        <begin position="16"/>
        <end position="33"/>
    </location>
</feature>
<feature type="topological domain" description="Cytoplasmic" evidence="1">
    <location>
        <begin position="34"/>
        <end position="69"/>
    </location>
</feature>
<feature type="transmembrane region" description="Helical; Name=2" evidence="1">
    <location>
        <begin position="70"/>
        <end position="87"/>
    </location>
</feature>
<feature type="topological domain" description="Lumenal" evidence="1">
    <location>
        <begin position="88"/>
        <end position="117"/>
    </location>
</feature>
<feature type="transmembrane region" description="Helical; Name=3" evidence="1">
    <location>
        <begin position="118"/>
        <end position="139"/>
    </location>
</feature>
<feature type="topological domain" description="Cytoplasmic" evidence="1">
    <location>
        <begin position="140"/>
        <end position="189"/>
    </location>
</feature>
<feature type="transmembrane region" description="Helical; Name=4" evidence="1">
    <location>
        <begin position="190"/>
        <end position="203"/>
    </location>
</feature>
<feature type="topological domain" description="Lumenal" evidence="1">
    <location>
        <begin position="204"/>
        <end position="214"/>
    </location>
</feature>
<feature type="transmembrane region" description="Helical; Name=5" evidence="1">
    <location>
        <begin position="215"/>
        <end position="231"/>
    </location>
</feature>
<feature type="topological domain" description="Cytoplasmic" evidence="1">
    <location>
        <begin position="232"/>
        <end position="237"/>
    </location>
</feature>
<feature type="transmembrane region" description="Helical; Name=6" evidence="1">
    <location>
        <begin position="238"/>
        <end position="255"/>
    </location>
</feature>
<feature type="topological domain" description="Lumenal" evidence="1">
    <location>
        <begin position="256"/>
        <end position="274"/>
    </location>
</feature>
<feature type="region of interest" description="Phosphatase sequence motif I">
    <location>
        <begin position="136"/>
        <end position="144"/>
    </location>
</feature>
<feature type="region of interest" description="Phosphatase sequence motif II">
    <location>
        <begin position="186"/>
        <end position="189"/>
    </location>
</feature>
<feature type="region of interest" description="Phosphatase sequence motif III">
    <location>
        <begin position="228"/>
        <end position="239"/>
    </location>
</feature>